<evidence type="ECO:0000250" key="1">
    <source>
        <dbReference type="UniProtKB" id="P0CI24"/>
    </source>
</evidence>
<evidence type="ECO:0000269" key="2">
    <source>
    </source>
</evidence>
<evidence type="ECO:0000303" key="3">
    <source>
    </source>
</evidence>
<evidence type="ECO:0000305" key="4"/>
<evidence type="ECO:0000305" key="5">
    <source>
    </source>
</evidence>
<organism>
    <name type="scientific">Conus araneosus</name>
    <name type="common">Cobweb cone</name>
    <dbReference type="NCBI Taxonomy" id="101286"/>
    <lineage>
        <taxon>Eukaryota</taxon>
        <taxon>Metazoa</taxon>
        <taxon>Spiralia</taxon>
        <taxon>Lophotrochozoa</taxon>
        <taxon>Mollusca</taxon>
        <taxon>Gastropoda</taxon>
        <taxon>Caenogastropoda</taxon>
        <taxon>Neogastropoda</taxon>
        <taxon>Conoidea</taxon>
        <taxon>Conidae</taxon>
        <taxon>Conus</taxon>
    </lineage>
</organism>
<reference key="1">
    <citation type="journal article" date="2015" name="Toxicon">
        <title>A sleep-inducing peptide from the venom of the Indian cone snail Conus araneosus.</title>
        <authorList>
            <person name="Franklin J.B."/>
            <person name="Rajesh R.P."/>
        </authorList>
    </citation>
    <scope>PROTEIN SEQUENCE</scope>
    <scope>FUNCTION</scope>
    <scope>SUBCELLULAR LOCATION</scope>
    <scope>MASS SPECTROMETRY</scope>
    <scope>IDENTIFICATION BY MASS SPECTROMETRY</scope>
    <scope>PYROGLUTAMATE FORMATION AT GLU-1</scope>
    <source>
        <tissue>Venom</tissue>
    </source>
</reference>
<feature type="peptide" id="PRO_0000441667" description="Conotoxin ar3i" evidence="2">
    <location>
        <begin position="1"/>
        <end position="16"/>
    </location>
</feature>
<feature type="modified residue" description="Pyrrolidone carboxylic acid (Glu); partial" evidence="2">
    <location>
        <position position="1"/>
    </location>
</feature>
<feature type="disulfide bond" evidence="1">
    <location>
        <begin position="2"/>
        <end position="16"/>
    </location>
</feature>
<feature type="disulfide bond" evidence="1">
    <location>
        <begin position="3"/>
        <end position="12"/>
    </location>
</feature>
<feature type="disulfide bond" evidence="1">
    <location>
        <begin position="8"/>
        <end position="15"/>
    </location>
</feature>
<protein>
    <recommendedName>
        <fullName evidence="3">Conotoxin ar3i</fullName>
    </recommendedName>
    <alternativeName>
        <fullName evidence="3">Conotoxin ar3j</fullName>
    </alternativeName>
</protein>
<dbReference type="GO" id="GO:0005576">
    <property type="term" value="C:extracellular region"/>
    <property type="evidence" value="ECO:0000314"/>
    <property type="project" value="UniProtKB"/>
</dbReference>
<dbReference type="GO" id="GO:0090729">
    <property type="term" value="F:toxin activity"/>
    <property type="evidence" value="ECO:0007669"/>
    <property type="project" value="UniProtKB-KW"/>
</dbReference>
<keyword id="KW-0903">Direct protein sequencing</keyword>
<keyword id="KW-1015">Disulfide bond</keyword>
<keyword id="KW-0873">Pyrrolidone carboxylic acid</keyword>
<keyword id="KW-0964">Secreted</keyword>
<keyword id="KW-0800">Toxin</keyword>
<name>M3I_CONAO</name>
<comment type="function">
    <text evidence="2">Has a sleep-inducing effect in mice when injected intraperitoneally.</text>
</comment>
<comment type="subcellular location">
    <subcellularLocation>
        <location evidence="2">Secreted</location>
    </subcellularLocation>
</comment>
<comment type="tissue specificity">
    <text evidence="5">Expressed by the venom duct.</text>
</comment>
<comment type="domain">
    <text evidence="4">The cysteine framework is III (CC-C-C-CC). Classified in the M-2 branch, since 2 residues stand between the fourth and the fifth cysteine residues.</text>
</comment>
<comment type="mass spectrometry" mass="1841.0" method="MALDI" evidence="2">
    <text>Pyrolutamate modification.</text>
</comment>
<comment type="mass spectrometry" mass="1859.0" method="MALDI" evidence="2">
    <text>No pyrolutamate modification.</text>
</comment>
<comment type="similarity">
    <text evidence="4">Belongs to the conotoxin M superfamily.</text>
</comment>
<sequence length="16" mass="1867">ECCRYVDCRRGCTPCC</sequence>
<accession>C0HKZ3</accession>
<proteinExistence type="evidence at protein level"/>